<dbReference type="EC" id="6.3.2.1" evidence="1"/>
<dbReference type="EMBL" id="CP000529">
    <property type="protein sequence ID" value="ABM36250.1"/>
    <property type="molecule type" value="Genomic_DNA"/>
</dbReference>
<dbReference type="RefSeq" id="WP_011800344.1">
    <property type="nucleotide sequence ID" value="NC_008781.1"/>
</dbReference>
<dbReference type="SMR" id="A1VKS2"/>
<dbReference type="STRING" id="365044.Pnap_0933"/>
<dbReference type="KEGG" id="pna:Pnap_0933"/>
<dbReference type="eggNOG" id="COG0414">
    <property type="taxonomic scope" value="Bacteria"/>
</dbReference>
<dbReference type="HOGENOM" id="CLU_047148_0_0_4"/>
<dbReference type="OrthoDB" id="9773087at2"/>
<dbReference type="UniPathway" id="UPA00028">
    <property type="reaction ID" value="UER00005"/>
</dbReference>
<dbReference type="Proteomes" id="UP000000644">
    <property type="component" value="Chromosome"/>
</dbReference>
<dbReference type="GO" id="GO:0005829">
    <property type="term" value="C:cytosol"/>
    <property type="evidence" value="ECO:0007669"/>
    <property type="project" value="TreeGrafter"/>
</dbReference>
<dbReference type="GO" id="GO:0005524">
    <property type="term" value="F:ATP binding"/>
    <property type="evidence" value="ECO:0007669"/>
    <property type="project" value="UniProtKB-KW"/>
</dbReference>
<dbReference type="GO" id="GO:0004592">
    <property type="term" value="F:pantoate-beta-alanine ligase activity"/>
    <property type="evidence" value="ECO:0007669"/>
    <property type="project" value="UniProtKB-UniRule"/>
</dbReference>
<dbReference type="GO" id="GO:0015940">
    <property type="term" value="P:pantothenate biosynthetic process"/>
    <property type="evidence" value="ECO:0007669"/>
    <property type="project" value="UniProtKB-UniRule"/>
</dbReference>
<dbReference type="CDD" id="cd00560">
    <property type="entry name" value="PanC"/>
    <property type="match status" value="1"/>
</dbReference>
<dbReference type="Gene3D" id="3.40.50.620">
    <property type="entry name" value="HUPs"/>
    <property type="match status" value="1"/>
</dbReference>
<dbReference type="Gene3D" id="3.30.1300.10">
    <property type="entry name" value="Pantoate-beta-alanine ligase, C-terminal domain"/>
    <property type="match status" value="1"/>
</dbReference>
<dbReference type="HAMAP" id="MF_00158">
    <property type="entry name" value="PanC"/>
    <property type="match status" value="1"/>
</dbReference>
<dbReference type="InterPro" id="IPR003721">
    <property type="entry name" value="Pantoate_ligase"/>
</dbReference>
<dbReference type="InterPro" id="IPR042176">
    <property type="entry name" value="Pantoate_ligase_C"/>
</dbReference>
<dbReference type="InterPro" id="IPR014729">
    <property type="entry name" value="Rossmann-like_a/b/a_fold"/>
</dbReference>
<dbReference type="NCBIfam" id="TIGR00018">
    <property type="entry name" value="panC"/>
    <property type="match status" value="1"/>
</dbReference>
<dbReference type="PANTHER" id="PTHR21299">
    <property type="entry name" value="CYTIDYLATE KINASE/PANTOATE-BETA-ALANINE LIGASE"/>
    <property type="match status" value="1"/>
</dbReference>
<dbReference type="PANTHER" id="PTHR21299:SF1">
    <property type="entry name" value="PANTOATE--BETA-ALANINE LIGASE"/>
    <property type="match status" value="1"/>
</dbReference>
<dbReference type="Pfam" id="PF02569">
    <property type="entry name" value="Pantoate_ligase"/>
    <property type="match status" value="1"/>
</dbReference>
<dbReference type="SUPFAM" id="SSF52374">
    <property type="entry name" value="Nucleotidylyl transferase"/>
    <property type="match status" value="1"/>
</dbReference>
<proteinExistence type="inferred from homology"/>
<accession>A1VKS2</accession>
<comment type="function">
    <text evidence="1">Catalyzes the condensation of pantoate with beta-alanine in an ATP-dependent reaction via a pantoyl-adenylate intermediate.</text>
</comment>
<comment type="catalytic activity">
    <reaction evidence="1">
        <text>(R)-pantoate + beta-alanine + ATP = (R)-pantothenate + AMP + diphosphate + H(+)</text>
        <dbReference type="Rhea" id="RHEA:10912"/>
        <dbReference type="ChEBI" id="CHEBI:15378"/>
        <dbReference type="ChEBI" id="CHEBI:15980"/>
        <dbReference type="ChEBI" id="CHEBI:29032"/>
        <dbReference type="ChEBI" id="CHEBI:30616"/>
        <dbReference type="ChEBI" id="CHEBI:33019"/>
        <dbReference type="ChEBI" id="CHEBI:57966"/>
        <dbReference type="ChEBI" id="CHEBI:456215"/>
        <dbReference type="EC" id="6.3.2.1"/>
    </reaction>
</comment>
<comment type="pathway">
    <text evidence="1">Cofactor biosynthesis; (R)-pantothenate biosynthesis; (R)-pantothenate from (R)-pantoate and beta-alanine: step 1/1.</text>
</comment>
<comment type="subunit">
    <text evidence="1">Homodimer.</text>
</comment>
<comment type="subcellular location">
    <subcellularLocation>
        <location evidence="1">Cytoplasm</location>
    </subcellularLocation>
</comment>
<comment type="miscellaneous">
    <text evidence="1">The reaction proceeds by a bi uni uni bi ping pong mechanism.</text>
</comment>
<comment type="similarity">
    <text evidence="1">Belongs to the pantothenate synthetase family.</text>
</comment>
<sequence>MHIVHTIAELRQQLSGFKRPAFVPTMGNLHEGHIALVRQARPLGDVTVSSIFVNRLQFAPHEDFDSYPRTLDADAERLEAAGCDVVFAPREKDLYPEPQTFKVHPATDLSDILEGHFRPGFFIGVSTVVMKLFSCVFAGMPTGVAAFGKKDYQQVMVVRRLVQQFALPIEILAGETQRAEDGLALSSRNSYLSPAERQEAVHLSRALRALGEAARAATGQPDLAALESQALQALARRGWKPDYLTVRRRADLAPPQGALADVPLVVLGAAKLGNTRLIDNLEI</sequence>
<gene>
    <name evidence="1" type="primary">panC</name>
    <name type="ordered locus">Pnap_0933</name>
</gene>
<keyword id="KW-0067">ATP-binding</keyword>
<keyword id="KW-0963">Cytoplasm</keyword>
<keyword id="KW-0436">Ligase</keyword>
<keyword id="KW-0547">Nucleotide-binding</keyword>
<keyword id="KW-0566">Pantothenate biosynthesis</keyword>
<keyword id="KW-1185">Reference proteome</keyword>
<protein>
    <recommendedName>
        <fullName evidence="1">Pantothenate synthetase</fullName>
        <shortName evidence="1">PS</shortName>
        <ecNumber evidence="1">6.3.2.1</ecNumber>
    </recommendedName>
    <alternativeName>
        <fullName evidence="1">Pantoate--beta-alanine ligase</fullName>
    </alternativeName>
    <alternativeName>
        <fullName evidence="1">Pantoate-activating enzyme</fullName>
    </alternativeName>
</protein>
<reference key="1">
    <citation type="journal article" date="2009" name="Environ. Microbiol.">
        <title>The genome of Polaromonas naphthalenivorans strain CJ2, isolated from coal tar-contaminated sediment, reveals physiological and metabolic versatility and evolution through extensive horizontal gene transfer.</title>
        <authorList>
            <person name="Yagi J.M."/>
            <person name="Sims D."/>
            <person name="Brettin T."/>
            <person name="Bruce D."/>
            <person name="Madsen E.L."/>
        </authorList>
    </citation>
    <scope>NUCLEOTIDE SEQUENCE [LARGE SCALE GENOMIC DNA]</scope>
    <source>
        <strain>CJ2</strain>
    </source>
</reference>
<evidence type="ECO:0000255" key="1">
    <source>
        <dbReference type="HAMAP-Rule" id="MF_00158"/>
    </source>
</evidence>
<organism>
    <name type="scientific">Polaromonas naphthalenivorans (strain CJ2)</name>
    <dbReference type="NCBI Taxonomy" id="365044"/>
    <lineage>
        <taxon>Bacteria</taxon>
        <taxon>Pseudomonadati</taxon>
        <taxon>Pseudomonadota</taxon>
        <taxon>Betaproteobacteria</taxon>
        <taxon>Burkholderiales</taxon>
        <taxon>Comamonadaceae</taxon>
        <taxon>Polaromonas</taxon>
    </lineage>
</organism>
<feature type="chain" id="PRO_0000305509" description="Pantothenate synthetase">
    <location>
        <begin position="1"/>
        <end position="283"/>
    </location>
</feature>
<feature type="active site" description="Proton donor" evidence="1">
    <location>
        <position position="33"/>
    </location>
</feature>
<feature type="binding site" evidence="1">
    <location>
        <begin position="26"/>
        <end position="33"/>
    </location>
    <ligand>
        <name>ATP</name>
        <dbReference type="ChEBI" id="CHEBI:30616"/>
    </ligand>
</feature>
<feature type="binding site" evidence="1">
    <location>
        <position position="57"/>
    </location>
    <ligand>
        <name>(R)-pantoate</name>
        <dbReference type="ChEBI" id="CHEBI:15980"/>
    </ligand>
</feature>
<feature type="binding site" evidence="1">
    <location>
        <position position="57"/>
    </location>
    <ligand>
        <name>beta-alanine</name>
        <dbReference type="ChEBI" id="CHEBI:57966"/>
    </ligand>
</feature>
<feature type="binding site" evidence="1">
    <location>
        <begin position="148"/>
        <end position="151"/>
    </location>
    <ligand>
        <name>ATP</name>
        <dbReference type="ChEBI" id="CHEBI:30616"/>
    </ligand>
</feature>
<feature type="binding site" evidence="1">
    <location>
        <position position="154"/>
    </location>
    <ligand>
        <name>(R)-pantoate</name>
        <dbReference type="ChEBI" id="CHEBI:15980"/>
    </ligand>
</feature>
<feature type="binding site" evidence="1">
    <location>
        <begin position="185"/>
        <end position="188"/>
    </location>
    <ligand>
        <name>ATP</name>
        <dbReference type="ChEBI" id="CHEBI:30616"/>
    </ligand>
</feature>
<name>PANC_POLNA</name>